<accession>P67821</accession>
<accession>P02041</accession>
<accession>Q6WN24</accession>
<comment type="function">
    <text>Involved in oxygen transport from the lung to the various peripheral tissues.</text>
</comment>
<comment type="subunit">
    <text>Heterotetramer of two alpha chains and two beta chains.</text>
</comment>
<comment type="tissue specificity">
    <text>Red blood cells.</text>
</comment>
<comment type="similarity">
    <text evidence="3">Belongs to the globin family.</text>
</comment>
<feature type="initiator methionine" description="Removed" evidence="1 4">
    <location>
        <position position="1"/>
    </location>
</feature>
<feature type="chain" id="PRO_0000052917" description="Hemoglobin subunit beta">
    <location>
        <begin position="2"/>
        <end position="147"/>
    </location>
</feature>
<feature type="domain" description="Globin" evidence="3">
    <location>
        <begin position="3"/>
        <end position="147"/>
    </location>
</feature>
<feature type="binding site" description="distal binding residue">
    <location>
        <position position="64"/>
    </location>
    <ligand>
        <name>heme b</name>
        <dbReference type="ChEBI" id="CHEBI:60344"/>
    </ligand>
    <ligandPart>
        <name>Fe</name>
        <dbReference type="ChEBI" id="CHEBI:18248"/>
    </ligandPart>
</feature>
<feature type="binding site" description="proximal binding residue">
    <location>
        <position position="93"/>
    </location>
    <ligand>
        <name>heme b</name>
        <dbReference type="ChEBI" id="CHEBI:60344"/>
    </ligand>
    <ligandPart>
        <name>Fe</name>
        <dbReference type="ChEBI" id="CHEBI:18248"/>
    </ligandPart>
</feature>
<feature type="modified residue" description="N-acetylvaline" evidence="1">
    <location>
        <position position="2"/>
    </location>
</feature>
<feature type="modified residue" description="Phosphothreonine" evidence="2">
    <location>
        <position position="13"/>
    </location>
</feature>
<feature type="modified residue" description="Phosphoserine" evidence="2">
    <location>
        <position position="45"/>
    </location>
</feature>
<feature type="modified residue" description="N6-acetyllysine" evidence="2">
    <location>
        <position position="60"/>
    </location>
</feature>
<feature type="modified residue" description="N6-acetyllysine" evidence="2">
    <location>
        <position position="83"/>
    </location>
</feature>
<feature type="modified residue" description="S-nitrosocysteine" evidence="2">
    <location>
        <position position="94"/>
    </location>
</feature>
<feature type="modified residue" description="N6-acetyllysine" evidence="2">
    <location>
        <position position="145"/>
    </location>
</feature>
<feature type="sequence conflict" description="In Ref. 2; AA sequence." evidence="5" ref="2">
    <original>N</original>
    <variation>T</variation>
    <location>
        <position position="140"/>
    </location>
</feature>
<sequence length="147" mass="16133">MVHLTAEEKSAVTTLWGKVNVDEVGGEALGRLLVVYPWTQRFFDSFGDLSTPDAVMNNPKVKAHGKKVLGAFSDGLTHLDNLKGTFAQLSELHCDKLHVDPENFRLLGNVLVCVLAHHFGKEFTPQVQAAYQKVVAGVANALAHKYH</sequence>
<name>HBB_SAPAP</name>
<reference key="1">
    <citation type="submission" date="2003-04" db="EMBL/GenBank/DDBJ databases">
        <title>The molecular evolution of the primate beta globin gene: an evaluation of gene conversion and phylogeny and an analysis of phylogenetic footprints in noncoding DNA.</title>
        <authorList>
            <person name="Prychitko T.M."/>
            <person name="Goodman M."/>
            <person name="Johnson R.M."/>
        </authorList>
    </citation>
    <scope>NUCLEOTIDE SEQUENCE [GENOMIC DNA]</scope>
</reference>
<reference key="2">
    <citation type="journal article" date="1974" name="Seikagaku">
        <title>Amino acid sequences of the tryptic peptides from the beta chain of hemoglobin of tufted capuchin monkey (Cebus apella).</title>
        <authorList>
            <person name="Watanabe B."/>
        </authorList>
    </citation>
    <scope>PROTEIN SEQUENCE OF 2-147</scope>
</reference>
<protein>
    <recommendedName>
        <fullName>Hemoglobin subunit beta</fullName>
    </recommendedName>
    <alternativeName>
        <fullName>Beta-globin</fullName>
    </alternativeName>
    <alternativeName>
        <fullName>Hemoglobin beta chain</fullName>
    </alternativeName>
</protein>
<proteinExistence type="evidence at protein level"/>
<organism>
    <name type="scientific">Sapajus apella</name>
    <name type="common">Brown-capped capuchin</name>
    <name type="synonym">Cebus apella</name>
    <dbReference type="NCBI Taxonomy" id="9515"/>
    <lineage>
        <taxon>Eukaryota</taxon>
        <taxon>Metazoa</taxon>
        <taxon>Chordata</taxon>
        <taxon>Craniata</taxon>
        <taxon>Vertebrata</taxon>
        <taxon>Euteleostomi</taxon>
        <taxon>Mammalia</taxon>
        <taxon>Eutheria</taxon>
        <taxon>Euarchontoglires</taxon>
        <taxon>Primates</taxon>
        <taxon>Haplorrhini</taxon>
        <taxon>Platyrrhini</taxon>
        <taxon>Cebidae</taxon>
        <taxon>Cebinae</taxon>
        <taxon>Sapajus</taxon>
    </lineage>
</organism>
<dbReference type="EMBL" id="AY279115">
    <property type="protein sequence ID" value="AAQ18223.1"/>
    <property type="molecule type" value="Genomic_DNA"/>
</dbReference>
<dbReference type="PIR" id="A02362">
    <property type="entry name" value="HBMQA"/>
</dbReference>
<dbReference type="RefSeq" id="XP_032096415.1">
    <property type="nucleotide sequence ID" value="XM_032240524.1"/>
</dbReference>
<dbReference type="SMR" id="P67821"/>
<dbReference type="GeneID" id="116525018"/>
<dbReference type="Proteomes" id="UP000504640">
    <property type="component" value="Unplaced"/>
</dbReference>
<dbReference type="GO" id="GO:0072562">
    <property type="term" value="C:blood microparticle"/>
    <property type="evidence" value="ECO:0007669"/>
    <property type="project" value="TreeGrafter"/>
</dbReference>
<dbReference type="GO" id="GO:0031838">
    <property type="term" value="C:haptoglobin-hemoglobin complex"/>
    <property type="evidence" value="ECO:0007669"/>
    <property type="project" value="TreeGrafter"/>
</dbReference>
<dbReference type="GO" id="GO:0005833">
    <property type="term" value="C:hemoglobin complex"/>
    <property type="evidence" value="ECO:0007669"/>
    <property type="project" value="InterPro"/>
</dbReference>
<dbReference type="GO" id="GO:0031720">
    <property type="term" value="F:haptoglobin binding"/>
    <property type="evidence" value="ECO:0007669"/>
    <property type="project" value="TreeGrafter"/>
</dbReference>
<dbReference type="GO" id="GO:0020037">
    <property type="term" value="F:heme binding"/>
    <property type="evidence" value="ECO:0007669"/>
    <property type="project" value="InterPro"/>
</dbReference>
<dbReference type="GO" id="GO:0031721">
    <property type="term" value="F:hemoglobin alpha binding"/>
    <property type="evidence" value="ECO:0007669"/>
    <property type="project" value="TreeGrafter"/>
</dbReference>
<dbReference type="GO" id="GO:0046872">
    <property type="term" value="F:metal ion binding"/>
    <property type="evidence" value="ECO:0007669"/>
    <property type="project" value="UniProtKB-KW"/>
</dbReference>
<dbReference type="GO" id="GO:0043177">
    <property type="term" value="F:organic acid binding"/>
    <property type="evidence" value="ECO:0007669"/>
    <property type="project" value="TreeGrafter"/>
</dbReference>
<dbReference type="GO" id="GO:0019825">
    <property type="term" value="F:oxygen binding"/>
    <property type="evidence" value="ECO:0007669"/>
    <property type="project" value="InterPro"/>
</dbReference>
<dbReference type="GO" id="GO:0005344">
    <property type="term" value="F:oxygen carrier activity"/>
    <property type="evidence" value="ECO:0007669"/>
    <property type="project" value="UniProtKB-KW"/>
</dbReference>
<dbReference type="GO" id="GO:0004601">
    <property type="term" value="F:peroxidase activity"/>
    <property type="evidence" value="ECO:0007669"/>
    <property type="project" value="TreeGrafter"/>
</dbReference>
<dbReference type="GO" id="GO:0042744">
    <property type="term" value="P:hydrogen peroxide catabolic process"/>
    <property type="evidence" value="ECO:0007669"/>
    <property type="project" value="TreeGrafter"/>
</dbReference>
<dbReference type="CDD" id="cd08925">
    <property type="entry name" value="Hb-beta-like"/>
    <property type="match status" value="1"/>
</dbReference>
<dbReference type="FunFam" id="1.10.490.10:FF:000001">
    <property type="entry name" value="Hemoglobin subunit beta"/>
    <property type="match status" value="1"/>
</dbReference>
<dbReference type="Gene3D" id="1.10.490.10">
    <property type="entry name" value="Globins"/>
    <property type="match status" value="1"/>
</dbReference>
<dbReference type="InterPro" id="IPR000971">
    <property type="entry name" value="Globin"/>
</dbReference>
<dbReference type="InterPro" id="IPR009050">
    <property type="entry name" value="Globin-like_sf"/>
</dbReference>
<dbReference type="InterPro" id="IPR012292">
    <property type="entry name" value="Globin/Proto"/>
</dbReference>
<dbReference type="InterPro" id="IPR002337">
    <property type="entry name" value="Hemoglobin_b"/>
</dbReference>
<dbReference type="InterPro" id="IPR050056">
    <property type="entry name" value="Hemoglobin_oxygen_transport"/>
</dbReference>
<dbReference type="PANTHER" id="PTHR11442">
    <property type="entry name" value="HEMOGLOBIN FAMILY MEMBER"/>
    <property type="match status" value="1"/>
</dbReference>
<dbReference type="PANTHER" id="PTHR11442:SF42">
    <property type="entry name" value="HEMOGLOBIN SUBUNIT BETA"/>
    <property type="match status" value="1"/>
</dbReference>
<dbReference type="Pfam" id="PF00042">
    <property type="entry name" value="Globin"/>
    <property type="match status" value="1"/>
</dbReference>
<dbReference type="PRINTS" id="PR00814">
    <property type="entry name" value="BETAHAEM"/>
</dbReference>
<dbReference type="SUPFAM" id="SSF46458">
    <property type="entry name" value="Globin-like"/>
    <property type="match status" value="1"/>
</dbReference>
<dbReference type="PROSITE" id="PS01033">
    <property type="entry name" value="GLOBIN"/>
    <property type="match status" value="1"/>
</dbReference>
<evidence type="ECO:0000250" key="1">
    <source>
        <dbReference type="UniProtKB" id="P02086"/>
    </source>
</evidence>
<evidence type="ECO:0000250" key="2">
    <source>
        <dbReference type="UniProtKB" id="P68871"/>
    </source>
</evidence>
<evidence type="ECO:0000255" key="3">
    <source>
        <dbReference type="PROSITE-ProRule" id="PRU00238"/>
    </source>
</evidence>
<evidence type="ECO:0000269" key="4">
    <source>
    </source>
</evidence>
<evidence type="ECO:0000305" key="5"/>
<keyword id="KW-0007">Acetylation</keyword>
<keyword id="KW-0903">Direct protein sequencing</keyword>
<keyword id="KW-0349">Heme</keyword>
<keyword id="KW-0408">Iron</keyword>
<keyword id="KW-0479">Metal-binding</keyword>
<keyword id="KW-0561">Oxygen transport</keyword>
<keyword id="KW-0597">Phosphoprotein</keyword>
<keyword id="KW-1185">Reference proteome</keyword>
<keyword id="KW-0702">S-nitrosylation</keyword>
<keyword id="KW-0813">Transport</keyword>
<gene>
    <name type="primary">HBB</name>
</gene>